<comment type="function">
    <text evidence="1">Synthesizes alpha-1,4-glucan chains using ADP-glucose.</text>
</comment>
<comment type="catalytic activity">
    <reaction evidence="1">
        <text>[(1-&gt;4)-alpha-D-glucosyl](n) + ADP-alpha-D-glucose = [(1-&gt;4)-alpha-D-glucosyl](n+1) + ADP + H(+)</text>
        <dbReference type="Rhea" id="RHEA:18189"/>
        <dbReference type="Rhea" id="RHEA-COMP:9584"/>
        <dbReference type="Rhea" id="RHEA-COMP:9587"/>
        <dbReference type="ChEBI" id="CHEBI:15378"/>
        <dbReference type="ChEBI" id="CHEBI:15444"/>
        <dbReference type="ChEBI" id="CHEBI:57498"/>
        <dbReference type="ChEBI" id="CHEBI:456216"/>
        <dbReference type="EC" id="2.4.1.21"/>
    </reaction>
</comment>
<comment type="pathway">
    <text evidence="1">Glycan biosynthesis; glycogen biosynthesis.</text>
</comment>
<comment type="similarity">
    <text evidence="1">Belongs to the glycosyltransferase 1 family. Bacterial/plant glycogen synthase subfamily.</text>
</comment>
<gene>
    <name evidence="1" type="primary">glgA</name>
    <name type="ordered locus">ECSE_3698</name>
</gene>
<protein>
    <recommendedName>
        <fullName evidence="1">Glycogen synthase</fullName>
        <ecNumber evidence="1">2.4.1.21</ecNumber>
    </recommendedName>
    <alternativeName>
        <fullName evidence="1">Starch [bacterial glycogen] synthase</fullName>
    </alternativeName>
</protein>
<dbReference type="EC" id="2.4.1.21" evidence="1"/>
<dbReference type="EMBL" id="AP009240">
    <property type="protein sequence ID" value="BAG79222.1"/>
    <property type="molecule type" value="Genomic_DNA"/>
</dbReference>
<dbReference type="RefSeq" id="WP_001197646.1">
    <property type="nucleotide sequence ID" value="NC_011415.1"/>
</dbReference>
<dbReference type="SMR" id="B6I2Z5"/>
<dbReference type="CAZy" id="GT5">
    <property type="family name" value="Glycosyltransferase Family 5"/>
</dbReference>
<dbReference type="GeneID" id="75202274"/>
<dbReference type="KEGG" id="ecy:ECSE_3698"/>
<dbReference type="HOGENOM" id="CLU_009583_18_2_6"/>
<dbReference type="UniPathway" id="UPA00164"/>
<dbReference type="Proteomes" id="UP000008199">
    <property type="component" value="Chromosome"/>
</dbReference>
<dbReference type="GO" id="GO:0005829">
    <property type="term" value="C:cytosol"/>
    <property type="evidence" value="ECO:0007669"/>
    <property type="project" value="TreeGrafter"/>
</dbReference>
<dbReference type="GO" id="GO:0009011">
    <property type="term" value="F:alpha-1,4-glucan glucosyltransferase (ADP-glucose donor) activity"/>
    <property type="evidence" value="ECO:0007669"/>
    <property type="project" value="UniProtKB-UniRule"/>
</dbReference>
<dbReference type="GO" id="GO:0004373">
    <property type="term" value="F:alpha-1,4-glucan glucosyltransferase (UDP-glucose donor) activity"/>
    <property type="evidence" value="ECO:0007669"/>
    <property type="project" value="InterPro"/>
</dbReference>
<dbReference type="GO" id="GO:0005978">
    <property type="term" value="P:glycogen biosynthetic process"/>
    <property type="evidence" value="ECO:0007669"/>
    <property type="project" value="UniProtKB-UniRule"/>
</dbReference>
<dbReference type="CDD" id="cd03791">
    <property type="entry name" value="GT5_Glycogen_synthase_DULL1-like"/>
    <property type="match status" value="1"/>
</dbReference>
<dbReference type="FunFam" id="3.40.50.2000:FF:000008">
    <property type="entry name" value="Glycogen synthase"/>
    <property type="match status" value="1"/>
</dbReference>
<dbReference type="FunFam" id="3.40.50.2000:FF:000011">
    <property type="entry name" value="Glycogen synthase"/>
    <property type="match status" value="1"/>
</dbReference>
<dbReference type="Gene3D" id="3.40.50.2000">
    <property type="entry name" value="Glycogen Phosphorylase B"/>
    <property type="match status" value="2"/>
</dbReference>
<dbReference type="HAMAP" id="MF_00484">
    <property type="entry name" value="Glycogen_synth"/>
    <property type="match status" value="1"/>
</dbReference>
<dbReference type="InterPro" id="IPR001296">
    <property type="entry name" value="Glyco_trans_1"/>
</dbReference>
<dbReference type="InterPro" id="IPR011835">
    <property type="entry name" value="GS/SS"/>
</dbReference>
<dbReference type="InterPro" id="IPR013534">
    <property type="entry name" value="Starch_synth_cat_dom"/>
</dbReference>
<dbReference type="NCBIfam" id="TIGR02095">
    <property type="entry name" value="glgA"/>
    <property type="match status" value="1"/>
</dbReference>
<dbReference type="NCBIfam" id="NF001899">
    <property type="entry name" value="PRK00654.1-2"/>
    <property type="match status" value="1"/>
</dbReference>
<dbReference type="PANTHER" id="PTHR45825:SF11">
    <property type="entry name" value="ALPHA AMYLASE DOMAIN-CONTAINING PROTEIN"/>
    <property type="match status" value="1"/>
</dbReference>
<dbReference type="PANTHER" id="PTHR45825">
    <property type="entry name" value="GRANULE-BOUND STARCH SYNTHASE 1, CHLOROPLASTIC/AMYLOPLASTIC"/>
    <property type="match status" value="1"/>
</dbReference>
<dbReference type="Pfam" id="PF08323">
    <property type="entry name" value="Glyco_transf_5"/>
    <property type="match status" value="1"/>
</dbReference>
<dbReference type="Pfam" id="PF00534">
    <property type="entry name" value="Glycos_transf_1"/>
    <property type="match status" value="1"/>
</dbReference>
<dbReference type="SUPFAM" id="SSF53756">
    <property type="entry name" value="UDP-Glycosyltransferase/glycogen phosphorylase"/>
    <property type="match status" value="1"/>
</dbReference>
<reference key="1">
    <citation type="journal article" date="2008" name="DNA Res.">
        <title>Complete genome sequence and comparative analysis of the wild-type commensal Escherichia coli strain SE11 isolated from a healthy adult.</title>
        <authorList>
            <person name="Oshima K."/>
            <person name="Toh H."/>
            <person name="Ogura Y."/>
            <person name="Sasamoto H."/>
            <person name="Morita H."/>
            <person name="Park S.-H."/>
            <person name="Ooka T."/>
            <person name="Iyoda S."/>
            <person name="Taylor T.D."/>
            <person name="Hayashi T."/>
            <person name="Itoh K."/>
            <person name="Hattori M."/>
        </authorList>
    </citation>
    <scope>NUCLEOTIDE SEQUENCE [LARGE SCALE GENOMIC DNA]</scope>
    <source>
        <strain>SE11</strain>
    </source>
</reference>
<proteinExistence type="inferred from homology"/>
<sequence length="477" mass="52822">MQVLHVCSEMFPLLKTGGLADVIGALPAAQIADGVDARVLLPAFPDIRRGVTDAQVVSRRDTFAGHITLLFGHYNGVGIYLIDAPHLYDRPGSPYHDTNLFAYTDNVLRFALLGWVGAEMASGLDPFWRPDVVHAHDWHAGLAPAYLAARGRPAKSVFTVHNLAYQGMFYAHHMNDIQLPWSFFNIHGLEFNGQISFLKAGLYYADHITAVSPTYAREITEPQFAYGMEGLLQQRHREGRLSGVLNGVDEKIWSPETDLLLASRYTRDTLEDKAENKRQLQIAMGLKVDDKVPLFAVVSRLTSQKGLDLVLEALPGLLEQGGQLALLGAGDPVLQEGFLAAAAEYPGQVGVQIGYHEAFSHRIMGGADVILVPSRFEPCGLTQLYGLKYGTLPLVRRTGGLADTVSDCSLENLADGVASGFVFEDSNAWSLLRAIRRAFVLWSRPSLWRFVQRQAMAMDFSWQVAAKSYRELYYRLK</sequence>
<evidence type="ECO:0000255" key="1">
    <source>
        <dbReference type="HAMAP-Rule" id="MF_00484"/>
    </source>
</evidence>
<accession>B6I2Z5</accession>
<feature type="chain" id="PRO_1000126071" description="Glycogen synthase">
    <location>
        <begin position="1"/>
        <end position="477"/>
    </location>
</feature>
<feature type="binding site" evidence="1">
    <location>
        <position position="15"/>
    </location>
    <ligand>
        <name>ADP-alpha-D-glucose</name>
        <dbReference type="ChEBI" id="CHEBI:57498"/>
    </ligand>
</feature>
<keyword id="KW-0320">Glycogen biosynthesis</keyword>
<keyword id="KW-0328">Glycosyltransferase</keyword>
<keyword id="KW-0808">Transferase</keyword>
<name>GLGA_ECOSE</name>
<organism>
    <name type="scientific">Escherichia coli (strain SE11)</name>
    <dbReference type="NCBI Taxonomy" id="409438"/>
    <lineage>
        <taxon>Bacteria</taxon>
        <taxon>Pseudomonadati</taxon>
        <taxon>Pseudomonadota</taxon>
        <taxon>Gammaproteobacteria</taxon>
        <taxon>Enterobacterales</taxon>
        <taxon>Enterobacteriaceae</taxon>
        <taxon>Escherichia</taxon>
    </lineage>
</organism>